<protein>
    <recommendedName>
        <fullName>Chaperone protein DnaJ 1</fullName>
    </recommendedName>
</protein>
<feature type="chain" id="PRO_0000070894" description="Chaperone protein DnaJ 1">
    <location>
        <begin position="1" status="less than"/>
        <end position="82"/>
    </location>
</feature>
<feature type="region of interest" description="Disordered" evidence="2">
    <location>
        <begin position="1"/>
        <end position="33"/>
    </location>
</feature>
<feature type="non-terminal residue">
    <location>
        <position position="1"/>
    </location>
</feature>
<dbReference type="EMBL" id="U43299">
    <property type="protein sequence ID" value="AAB48077.1"/>
    <property type="molecule type" value="Genomic_DNA"/>
</dbReference>
<dbReference type="SMR" id="P96457"/>
<dbReference type="GO" id="GO:0005737">
    <property type="term" value="C:cytoplasm"/>
    <property type="evidence" value="ECO:0007669"/>
    <property type="project" value="UniProtKB-SubCell"/>
</dbReference>
<dbReference type="GO" id="GO:0046872">
    <property type="term" value="F:metal ion binding"/>
    <property type="evidence" value="ECO:0007669"/>
    <property type="project" value="UniProtKB-KW"/>
</dbReference>
<dbReference type="GO" id="GO:0051082">
    <property type="term" value="F:unfolded protein binding"/>
    <property type="evidence" value="ECO:0007669"/>
    <property type="project" value="InterPro"/>
</dbReference>
<dbReference type="GO" id="GO:0006260">
    <property type="term" value="P:DNA replication"/>
    <property type="evidence" value="ECO:0007669"/>
    <property type="project" value="UniProtKB-KW"/>
</dbReference>
<dbReference type="GO" id="GO:0006457">
    <property type="term" value="P:protein folding"/>
    <property type="evidence" value="ECO:0007669"/>
    <property type="project" value="InterPro"/>
</dbReference>
<dbReference type="Gene3D" id="2.60.260.20">
    <property type="entry name" value="Urease metallochaperone UreE, N-terminal domain"/>
    <property type="match status" value="1"/>
</dbReference>
<dbReference type="InterPro" id="IPR002939">
    <property type="entry name" value="DnaJ_C"/>
</dbReference>
<dbReference type="InterPro" id="IPR008971">
    <property type="entry name" value="HSP40/DnaJ_pept-bd"/>
</dbReference>
<dbReference type="Pfam" id="PF01556">
    <property type="entry name" value="DnaJ_C"/>
    <property type="match status" value="1"/>
</dbReference>
<dbReference type="SUPFAM" id="SSF49493">
    <property type="entry name" value="HSP40/DnaJ peptide-binding domain"/>
    <property type="match status" value="1"/>
</dbReference>
<gene>
    <name type="primary">dnaJ1</name>
</gene>
<proteinExistence type="inferred from homology"/>
<organism>
    <name type="scientific">Streptomyces albus G</name>
    <dbReference type="NCBI Taxonomy" id="1962"/>
    <lineage>
        <taxon>Bacteria</taxon>
        <taxon>Bacillati</taxon>
        <taxon>Actinomycetota</taxon>
        <taxon>Actinomycetes</taxon>
        <taxon>Kitasatosporales</taxon>
        <taxon>Streptomycetaceae</taxon>
        <taxon>Streptomyces</taxon>
    </lineage>
</organism>
<name>DNAJ1_STRAL</name>
<keyword id="KW-0143">Chaperone</keyword>
<keyword id="KW-0963">Cytoplasm</keyword>
<keyword id="KW-0235">DNA replication</keyword>
<keyword id="KW-0479">Metal-binding</keyword>
<keyword id="KW-0677">Repeat</keyword>
<keyword id="KW-0346">Stress response</keyword>
<keyword id="KW-0862">Zinc</keyword>
<comment type="function">
    <text evidence="1">Participates actively in the response to hyperosmotic and heat shock by preventing the aggregation of stress-denatured proteins and by disaggregating proteins, also in an autonomous, DnaK-independent fashion. Unfolded proteins bind initially to DnaJ; upon interaction with the DnaJ-bound protein, DnaK hydrolyzes its bound ATP, resulting in the formation of a stable complex. GrpE releases ADP from DnaK; ATP binding to DnaK triggers the release of the substrate protein, thus completing the reaction cycle. Several rounds of ATP-dependent interactions between DnaJ, DnaK and GrpE are required for fully efficient folding. Also involved, together with DnaK and GrpE, in the DNA replication of plasmids through activation of initiation proteins (By similarity).</text>
</comment>
<comment type="cofactor">
    <cofactor evidence="1">
        <name>Zn(2+)</name>
        <dbReference type="ChEBI" id="CHEBI:29105"/>
    </cofactor>
    <text evidence="1">Binds 2 Zn(2+) ions per monomer.</text>
</comment>
<comment type="subunit">
    <text evidence="1">Homodimer.</text>
</comment>
<comment type="subcellular location">
    <subcellularLocation>
        <location evidence="1">Cytoplasm</location>
    </subcellularLocation>
</comment>
<comment type="domain">
    <text evidence="1">The J domain is necessary and sufficient to stimulate DnaK ATPase activity. Zinc center 1 plays an important role in the autonomous, DnaK-independent chaperone activity of DnaJ. Zinc center 2 is essential for interaction with DnaK and for DnaJ activity (By similarity).</text>
</comment>
<comment type="similarity">
    <text evidence="3">Belongs to the DnaJ family.</text>
</comment>
<accession>P96457</accession>
<evidence type="ECO:0000250" key="1"/>
<evidence type="ECO:0000256" key="2">
    <source>
        <dbReference type="SAM" id="MobiDB-lite"/>
    </source>
</evidence>
<evidence type="ECO:0000305" key="3"/>
<sequence>YHLGGPPVTLKLPPGTPAGRTMRARGKGAVRKDGTRGDLLVTVDVAVPQHLSSEAREALEAYRKATADEDPRAELFKAAKGA</sequence>
<reference key="1">
    <citation type="journal article" date="1997" name="Mol. Microbiol.">
        <title>Disruption of hspR, the repressor gene of the dnaK operon in Streptomyces albus G.</title>
        <authorList>
            <person name="Grandvalet C."/>
            <person name="Servant P."/>
            <person name="Mazodier P."/>
        </authorList>
    </citation>
    <scope>NUCLEOTIDE SEQUENCE [GENOMIC DNA]</scope>
    <source>
        <strain>J1074</strain>
    </source>
</reference>